<feature type="chain" id="PRO_1000198828" description="Anthranilate phosphoribosyltransferase">
    <location>
        <begin position="1"/>
        <end position="339"/>
    </location>
</feature>
<feature type="binding site" evidence="1">
    <location>
        <position position="79"/>
    </location>
    <ligand>
        <name>5-phospho-alpha-D-ribose 1-diphosphate</name>
        <dbReference type="ChEBI" id="CHEBI:58017"/>
    </ligand>
</feature>
<feature type="binding site" evidence="1">
    <location>
        <position position="79"/>
    </location>
    <ligand>
        <name>anthranilate</name>
        <dbReference type="ChEBI" id="CHEBI:16567"/>
        <label>1</label>
    </ligand>
</feature>
<feature type="binding site" evidence="1">
    <location>
        <begin position="82"/>
        <end position="83"/>
    </location>
    <ligand>
        <name>5-phospho-alpha-D-ribose 1-diphosphate</name>
        <dbReference type="ChEBI" id="CHEBI:58017"/>
    </ligand>
</feature>
<feature type="binding site" evidence="1">
    <location>
        <position position="87"/>
    </location>
    <ligand>
        <name>5-phospho-alpha-D-ribose 1-diphosphate</name>
        <dbReference type="ChEBI" id="CHEBI:58017"/>
    </ligand>
</feature>
<feature type="binding site" evidence="1">
    <location>
        <begin position="89"/>
        <end position="92"/>
    </location>
    <ligand>
        <name>5-phospho-alpha-D-ribose 1-diphosphate</name>
        <dbReference type="ChEBI" id="CHEBI:58017"/>
    </ligand>
</feature>
<feature type="binding site" evidence="1">
    <location>
        <position position="91"/>
    </location>
    <ligand>
        <name>Mg(2+)</name>
        <dbReference type="ChEBI" id="CHEBI:18420"/>
        <label>1</label>
    </ligand>
</feature>
<feature type="binding site" evidence="1">
    <location>
        <begin position="107"/>
        <end position="115"/>
    </location>
    <ligand>
        <name>5-phospho-alpha-D-ribose 1-diphosphate</name>
        <dbReference type="ChEBI" id="CHEBI:58017"/>
    </ligand>
</feature>
<feature type="binding site" evidence="1">
    <location>
        <position position="110"/>
    </location>
    <ligand>
        <name>anthranilate</name>
        <dbReference type="ChEBI" id="CHEBI:16567"/>
        <label>1</label>
    </ligand>
</feature>
<feature type="binding site" evidence="1">
    <location>
        <position position="119"/>
    </location>
    <ligand>
        <name>5-phospho-alpha-D-ribose 1-diphosphate</name>
        <dbReference type="ChEBI" id="CHEBI:58017"/>
    </ligand>
</feature>
<feature type="binding site" evidence="1">
    <location>
        <position position="165"/>
    </location>
    <ligand>
        <name>anthranilate</name>
        <dbReference type="ChEBI" id="CHEBI:16567"/>
        <label>2</label>
    </ligand>
</feature>
<feature type="binding site" evidence="1">
    <location>
        <position position="224"/>
    </location>
    <ligand>
        <name>Mg(2+)</name>
        <dbReference type="ChEBI" id="CHEBI:18420"/>
        <label>2</label>
    </ligand>
</feature>
<feature type="binding site" evidence="1">
    <location>
        <position position="225"/>
    </location>
    <ligand>
        <name>Mg(2+)</name>
        <dbReference type="ChEBI" id="CHEBI:18420"/>
        <label>1</label>
    </ligand>
</feature>
<feature type="binding site" evidence="1">
    <location>
        <position position="225"/>
    </location>
    <ligand>
        <name>Mg(2+)</name>
        <dbReference type="ChEBI" id="CHEBI:18420"/>
        <label>2</label>
    </ligand>
</feature>
<proteinExistence type="inferred from homology"/>
<gene>
    <name evidence="1" type="primary">trpD</name>
    <name type="ordered locus">LMHCC_0931</name>
</gene>
<keyword id="KW-0028">Amino-acid biosynthesis</keyword>
<keyword id="KW-0057">Aromatic amino acid biosynthesis</keyword>
<keyword id="KW-0328">Glycosyltransferase</keyword>
<keyword id="KW-0460">Magnesium</keyword>
<keyword id="KW-0479">Metal-binding</keyword>
<keyword id="KW-0808">Transferase</keyword>
<keyword id="KW-0822">Tryptophan biosynthesis</keyword>
<dbReference type="EC" id="2.4.2.18" evidence="1"/>
<dbReference type="EMBL" id="CP001175">
    <property type="protein sequence ID" value="ACK39280.1"/>
    <property type="molecule type" value="Genomic_DNA"/>
</dbReference>
<dbReference type="RefSeq" id="WP_012581226.1">
    <property type="nucleotide sequence ID" value="NC_011660.1"/>
</dbReference>
<dbReference type="SMR" id="B8DHB1"/>
<dbReference type="KEGG" id="lmh:LMHCC_0931"/>
<dbReference type="HOGENOM" id="CLU_034315_2_1_9"/>
<dbReference type="UniPathway" id="UPA00035">
    <property type="reaction ID" value="UER00041"/>
</dbReference>
<dbReference type="GO" id="GO:0005829">
    <property type="term" value="C:cytosol"/>
    <property type="evidence" value="ECO:0007669"/>
    <property type="project" value="TreeGrafter"/>
</dbReference>
<dbReference type="GO" id="GO:0004048">
    <property type="term" value="F:anthranilate phosphoribosyltransferase activity"/>
    <property type="evidence" value="ECO:0007669"/>
    <property type="project" value="UniProtKB-UniRule"/>
</dbReference>
<dbReference type="GO" id="GO:0000287">
    <property type="term" value="F:magnesium ion binding"/>
    <property type="evidence" value="ECO:0007669"/>
    <property type="project" value="UniProtKB-UniRule"/>
</dbReference>
<dbReference type="GO" id="GO:0000162">
    <property type="term" value="P:L-tryptophan biosynthetic process"/>
    <property type="evidence" value="ECO:0007669"/>
    <property type="project" value="UniProtKB-UniRule"/>
</dbReference>
<dbReference type="FunFam" id="1.20.970.10:FF:000014">
    <property type="entry name" value="Anthranilate phosphoribosyltransferase"/>
    <property type="match status" value="1"/>
</dbReference>
<dbReference type="FunFam" id="3.40.1030.10:FF:000002">
    <property type="entry name" value="Anthranilate phosphoribosyltransferase"/>
    <property type="match status" value="1"/>
</dbReference>
<dbReference type="Gene3D" id="3.40.1030.10">
    <property type="entry name" value="Nucleoside phosphorylase/phosphoribosyltransferase catalytic domain"/>
    <property type="match status" value="1"/>
</dbReference>
<dbReference type="Gene3D" id="1.20.970.10">
    <property type="entry name" value="Transferase, Pyrimidine Nucleoside Phosphorylase, Chain C"/>
    <property type="match status" value="1"/>
</dbReference>
<dbReference type="HAMAP" id="MF_00211">
    <property type="entry name" value="TrpD"/>
    <property type="match status" value="1"/>
</dbReference>
<dbReference type="InterPro" id="IPR005940">
    <property type="entry name" value="Anthranilate_Pribosyl_Tfrase"/>
</dbReference>
<dbReference type="InterPro" id="IPR000312">
    <property type="entry name" value="Glycosyl_Trfase_fam3"/>
</dbReference>
<dbReference type="InterPro" id="IPR017459">
    <property type="entry name" value="Glycosyl_Trfase_fam3_N_dom"/>
</dbReference>
<dbReference type="InterPro" id="IPR036320">
    <property type="entry name" value="Glycosyl_Trfase_fam3_N_dom_sf"/>
</dbReference>
<dbReference type="InterPro" id="IPR035902">
    <property type="entry name" value="Nuc_phospho_transferase"/>
</dbReference>
<dbReference type="NCBIfam" id="TIGR01245">
    <property type="entry name" value="trpD"/>
    <property type="match status" value="1"/>
</dbReference>
<dbReference type="PANTHER" id="PTHR43285">
    <property type="entry name" value="ANTHRANILATE PHOSPHORIBOSYLTRANSFERASE"/>
    <property type="match status" value="1"/>
</dbReference>
<dbReference type="PANTHER" id="PTHR43285:SF2">
    <property type="entry name" value="ANTHRANILATE PHOSPHORIBOSYLTRANSFERASE"/>
    <property type="match status" value="1"/>
</dbReference>
<dbReference type="Pfam" id="PF02885">
    <property type="entry name" value="Glycos_trans_3N"/>
    <property type="match status" value="1"/>
</dbReference>
<dbReference type="Pfam" id="PF00591">
    <property type="entry name" value="Glycos_transf_3"/>
    <property type="match status" value="1"/>
</dbReference>
<dbReference type="SUPFAM" id="SSF52418">
    <property type="entry name" value="Nucleoside phosphorylase/phosphoribosyltransferase catalytic domain"/>
    <property type="match status" value="1"/>
</dbReference>
<dbReference type="SUPFAM" id="SSF47648">
    <property type="entry name" value="Nucleoside phosphorylase/phosphoribosyltransferase N-terminal domain"/>
    <property type="match status" value="1"/>
</dbReference>
<name>TRPD_LISMH</name>
<comment type="function">
    <text evidence="1">Catalyzes the transfer of the phosphoribosyl group of 5-phosphorylribose-1-pyrophosphate (PRPP) to anthranilate to yield N-(5'-phosphoribosyl)-anthranilate (PRA).</text>
</comment>
<comment type="catalytic activity">
    <reaction evidence="1">
        <text>N-(5-phospho-beta-D-ribosyl)anthranilate + diphosphate = 5-phospho-alpha-D-ribose 1-diphosphate + anthranilate</text>
        <dbReference type="Rhea" id="RHEA:11768"/>
        <dbReference type="ChEBI" id="CHEBI:16567"/>
        <dbReference type="ChEBI" id="CHEBI:18277"/>
        <dbReference type="ChEBI" id="CHEBI:33019"/>
        <dbReference type="ChEBI" id="CHEBI:58017"/>
        <dbReference type="EC" id="2.4.2.18"/>
    </reaction>
</comment>
<comment type="cofactor">
    <cofactor evidence="1">
        <name>Mg(2+)</name>
        <dbReference type="ChEBI" id="CHEBI:18420"/>
    </cofactor>
    <text evidence="1">Binds 2 magnesium ions per monomer.</text>
</comment>
<comment type="pathway">
    <text evidence="1">Amino-acid biosynthesis; L-tryptophan biosynthesis; L-tryptophan from chorismate: step 2/5.</text>
</comment>
<comment type="subunit">
    <text evidence="1">Homodimer.</text>
</comment>
<comment type="similarity">
    <text evidence="1">Belongs to the anthranilate phosphoribosyltransferase family.</text>
</comment>
<sequence>MEILLQKVYDQENLSKEEMTMIATEIFEGRLSKTKIAAFLMALKVKGETAEEMAGIAQAMQQVAIQVAFPAGTAMDNCGTGGDKSNSFNISTTSAFVLAAAGIPVAKHGNRSISSRSGSADVCQELGIDINMRPEDMTYLLEKVGIAFLFAPHVHPNMKYVMDVRKELGTPTIFNLIGPLTNPVHLETQLMGIYRRDLLEQTAEVLGQLGRKRAVVLNGAGFMDEASLAGENHYALYENGEVHLYTLRPEDVGLTSYPLEAITGGDAKENAAILRSVLDGEPGAYLDTVLLNAGFGLFANGKVATVQEGVDLARDLIRSGLAKQKLADLITYQKEVLAK</sequence>
<reference key="1">
    <citation type="journal article" date="2011" name="J. Bacteriol.">
        <title>Genome sequence of lineage III Listeria monocytogenes strain HCC23.</title>
        <authorList>
            <person name="Steele C.L."/>
            <person name="Donaldson J.R."/>
            <person name="Paul D."/>
            <person name="Banes M.M."/>
            <person name="Arick T."/>
            <person name="Bridges S.M."/>
            <person name="Lawrence M.L."/>
        </authorList>
    </citation>
    <scope>NUCLEOTIDE SEQUENCE [LARGE SCALE GENOMIC DNA]</scope>
    <source>
        <strain>HCC23</strain>
    </source>
</reference>
<organism>
    <name type="scientific">Listeria monocytogenes serotype 4a (strain HCC23)</name>
    <dbReference type="NCBI Taxonomy" id="552536"/>
    <lineage>
        <taxon>Bacteria</taxon>
        <taxon>Bacillati</taxon>
        <taxon>Bacillota</taxon>
        <taxon>Bacilli</taxon>
        <taxon>Bacillales</taxon>
        <taxon>Listeriaceae</taxon>
        <taxon>Listeria</taxon>
    </lineage>
</organism>
<protein>
    <recommendedName>
        <fullName evidence="1">Anthranilate phosphoribosyltransferase</fullName>
        <ecNumber evidence="1">2.4.2.18</ecNumber>
    </recommendedName>
</protein>
<accession>B8DHB1</accession>
<evidence type="ECO:0000255" key="1">
    <source>
        <dbReference type="HAMAP-Rule" id="MF_00211"/>
    </source>
</evidence>